<reference key="1">
    <citation type="journal article" date="2004" name="Plant J.">
        <title>Metabolic engineering of monoterpene biosynthesis: two-step production of (+)-trans-isopiperitenol by tobacco.</title>
        <authorList>
            <person name="Luecker J."/>
            <person name="Schwab W."/>
            <person name="Franssen M.C.R."/>
            <person name="Van Der Plas L.H.W."/>
            <person name="Bouwmeester H.J."/>
            <person name="Verhoeven H.A."/>
        </authorList>
    </citation>
    <scope>NUCLEOTIDE SEQUENCE [MRNA]</scope>
    <scope>CATALYTIC ACTIVITY</scope>
    <scope>FUNCTION</scope>
    <source>
        <tissue>Leaf</tissue>
    </source>
</reference>
<sequence length="496" mass="56322">MELQISSAIIILVATFVASLLIKQWRKSESRQNLPPGPPKLPLVGHLHLLWGKLPQHAMADMAKKYGPVTHVQLGEVFSVVLSSREATKEAMKLLDPACADRFESIGTRIMWYDNDDIIFSPYSDHWRQMRKICVSELLSARNVRSFGFIRQDEMSRLLRHLQSSAGETVDMTERIATLTCSIICRAAFGAIINDHEELVELVKDSLSMASGFELADLFPSSKLLNLLCWNKSKLWRMRRRVDTILEAIVDEHKLKKSGEFGGEDIIDVLFRMQKDSQIKVPITTNAIKAFIFDTFSAGTETSSTTTLWVMAELMRNPAVMAKAQAEVRAALKGKTSVDVDDVQELKYMKSVVKETMRMHPPIPLIPRSCREECEVNGYKIPNKARIMINVWSMGRNPLYWEKPETFWPERFDQVSRDFMGSDFEFIPFGAGRRICPGLNFGLANVEVPLAQLLYHFDWKLAEGMKPSDMDMSEAEGLTGIRKNNLLLVPTLYKSP</sequence>
<comment type="function">
    <text evidence="3">Hydroxylates both (+)- and (-)-limonene to (+) and (-)-trans-isopiperitenol.</text>
</comment>
<comment type="catalytic activity">
    <reaction evidence="3">
        <text>(4S)-limonene + reduced [NADPH--hemoprotein reductase] + O2 = (1S,6R)-isopiperitenol + oxidized [NADPH--hemoprotein reductase] + H2O + H(+)</text>
        <dbReference type="Rhea" id="RHEA:15129"/>
        <dbReference type="Rhea" id="RHEA-COMP:11964"/>
        <dbReference type="Rhea" id="RHEA-COMP:11965"/>
        <dbReference type="ChEBI" id="CHEBI:15377"/>
        <dbReference type="ChEBI" id="CHEBI:15378"/>
        <dbReference type="ChEBI" id="CHEBI:15379"/>
        <dbReference type="ChEBI" id="CHEBI:15383"/>
        <dbReference type="ChEBI" id="CHEBI:15406"/>
        <dbReference type="ChEBI" id="CHEBI:57618"/>
        <dbReference type="ChEBI" id="CHEBI:58210"/>
        <dbReference type="EC" id="1.14.14.99"/>
    </reaction>
</comment>
<comment type="cofactor">
    <cofactor evidence="1">
        <name>heme</name>
        <dbReference type="ChEBI" id="CHEBI:30413"/>
    </cofactor>
</comment>
<comment type="subcellular location">
    <subcellularLocation>
        <location evidence="4">Endoplasmic reticulum membrane</location>
        <topology evidence="4">Single-pass type II membrane protein</topology>
    </subcellularLocation>
</comment>
<comment type="similarity">
    <text evidence="4">Belongs to the cytochrome P450 family.</text>
</comment>
<feature type="chain" id="PRO_0000389503" description="Cytochrome P450 71D95">
    <location>
        <begin position="1"/>
        <end position="496"/>
    </location>
</feature>
<feature type="transmembrane region" description="Helical; Signal-anchor" evidence="2">
    <location>
        <begin position="2"/>
        <end position="22"/>
    </location>
</feature>
<feature type="binding site" description="axial binding residue" evidence="1">
    <location>
        <position position="436"/>
    </location>
    <ligand>
        <name>heme</name>
        <dbReference type="ChEBI" id="CHEBI:30413"/>
    </ligand>
    <ligandPart>
        <name>Fe</name>
        <dbReference type="ChEBI" id="CHEBI:18248"/>
    </ligandPart>
</feature>
<organism>
    <name type="scientific">Mentha spicata</name>
    <name type="common">Spearmint</name>
    <dbReference type="NCBI Taxonomy" id="29719"/>
    <lineage>
        <taxon>Eukaryota</taxon>
        <taxon>Viridiplantae</taxon>
        <taxon>Streptophyta</taxon>
        <taxon>Embryophyta</taxon>
        <taxon>Tracheophyta</taxon>
        <taxon>Spermatophyta</taxon>
        <taxon>Magnoliopsida</taxon>
        <taxon>eudicotyledons</taxon>
        <taxon>Gunneridae</taxon>
        <taxon>Pentapetalae</taxon>
        <taxon>asterids</taxon>
        <taxon>lamiids</taxon>
        <taxon>Lamiales</taxon>
        <taxon>Lamiaceae</taxon>
        <taxon>Nepetoideae</taxon>
        <taxon>Mentheae</taxon>
        <taxon>Menthinae</taxon>
        <taxon>Mentha</taxon>
    </lineage>
</organism>
<accession>Q6IV13</accession>
<gene>
    <name type="primary">CYP71D95</name>
    <name type="synonym">LIM3H</name>
</gene>
<protein>
    <recommendedName>
        <fullName>Cytochrome P450 71D95</fullName>
        <ecNumber evidence="3">1.14.14.99</ecNumber>
    </recommendedName>
    <alternativeName>
        <fullName>Limonene-3-hydroxylase</fullName>
    </alternativeName>
</protein>
<name>C7D95_MENSP</name>
<evidence type="ECO:0000250" key="1"/>
<evidence type="ECO:0000255" key="2"/>
<evidence type="ECO:0000269" key="3">
    <source>
    </source>
</evidence>
<evidence type="ECO:0000305" key="4"/>
<dbReference type="EC" id="1.14.14.99" evidence="3"/>
<dbReference type="EMBL" id="AY622319">
    <property type="protein sequence ID" value="AAT39473.1"/>
    <property type="molecule type" value="mRNA"/>
</dbReference>
<dbReference type="SMR" id="Q6IV13"/>
<dbReference type="KEGG" id="ag:AAT39473"/>
<dbReference type="GO" id="GO:0005789">
    <property type="term" value="C:endoplasmic reticulum membrane"/>
    <property type="evidence" value="ECO:0007669"/>
    <property type="project" value="UniProtKB-SubCell"/>
</dbReference>
<dbReference type="GO" id="GO:0018674">
    <property type="term" value="F:(S)-limonene 3-monooxygenase activity"/>
    <property type="evidence" value="ECO:0007669"/>
    <property type="project" value="UniProtKB-EC"/>
</dbReference>
<dbReference type="GO" id="GO:0020037">
    <property type="term" value="F:heme binding"/>
    <property type="evidence" value="ECO:0007669"/>
    <property type="project" value="InterPro"/>
</dbReference>
<dbReference type="GO" id="GO:0005506">
    <property type="term" value="F:iron ion binding"/>
    <property type="evidence" value="ECO:0007669"/>
    <property type="project" value="InterPro"/>
</dbReference>
<dbReference type="CDD" id="cd11072">
    <property type="entry name" value="CYP71-like"/>
    <property type="match status" value="1"/>
</dbReference>
<dbReference type="FunFam" id="1.10.630.10:FF:000043">
    <property type="entry name" value="Cytochrome P450 99A2"/>
    <property type="match status" value="1"/>
</dbReference>
<dbReference type="Gene3D" id="1.10.630.10">
    <property type="entry name" value="Cytochrome P450"/>
    <property type="match status" value="1"/>
</dbReference>
<dbReference type="InterPro" id="IPR052306">
    <property type="entry name" value="CYP450_71D"/>
</dbReference>
<dbReference type="InterPro" id="IPR001128">
    <property type="entry name" value="Cyt_P450"/>
</dbReference>
<dbReference type="InterPro" id="IPR017972">
    <property type="entry name" value="Cyt_P450_CS"/>
</dbReference>
<dbReference type="InterPro" id="IPR002401">
    <property type="entry name" value="Cyt_P450_E_grp-I"/>
</dbReference>
<dbReference type="InterPro" id="IPR036396">
    <property type="entry name" value="Cyt_P450_sf"/>
</dbReference>
<dbReference type="PANTHER" id="PTHR47953:SF16">
    <property type="entry name" value="CYTOCHROME P450 71D8"/>
    <property type="match status" value="1"/>
</dbReference>
<dbReference type="PANTHER" id="PTHR47953">
    <property type="entry name" value="OS08G0105600 PROTEIN"/>
    <property type="match status" value="1"/>
</dbReference>
<dbReference type="Pfam" id="PF00067">
    <property type="entry name" value="p450"/>
    <property type="match status" value="1"/>
</dbReference>
<dbReference type="PRINTS" id="PR00463">
    <property type="entry name" value="EP450I"/>
</dbReference>
<dbReference type="PRINTS" id="PR00385">
    <property type="entry name" value="P450"/>
</dbReference>
<dbReference type="SUPFAM" id="SSF48264">
    <property type="entry name" value="Cytochrome P450"/>
    <property type="match status" value="1"/>
</dbReference>
<dbReference type="PROSITE" id="PS00086">
    <property type="entry name" value="CYTOCHROME_P450"/>
    <property type="match status" value="1"/>
</dbReference>
<keyword id="KW-0256">Endoplasmic reticulum</keyword>
<keyword id="KW-0349">Heme</keyword>
<keyword id="KW-0408">Iron</keyword>
<keyword id="KW-0472">Membrane</keyword>
<keyword id="KW-0479">Metal-binding</keyword>
<keyword id="KW-0503">Monooxygenase</keyword>
<keyword id="KW-0560">Oxidoreductase</keyword>
<keyword id="KW-0735">Signal-anchor</keyword>
<keyword id="KW-0812">Transmembrane</keyword>
<keyword id="KW-1133">Transmembrane helix</keyword>
<proteinExistence type="evidence at protein level"/>